<feature type="chain" id="PRO_0000240778" description="Argininosuccinate lyase">
    <location>
        <begin position="1"/>
        <end position="461"/>
    </location>
</feature>
<proteinExistence type="inferred from homology"/>
<accession>Q5M2K3</accession>
<keyword id="KW-0028">Amino-acid biosynthesis</keyword>
<keyword id="KW-0055">Arginine biosynthesis</keyword>
<keyword id="KW-0963">Cytoplasm</keyword>
<keyword id="KW-0456">Lyase</keyword>
<keyword id="KW-1185">Reference proteome</keyword>
<protein>
    <recommendedName>
        <fullName evidence="1">Argininosuccinate lyase</fullName>
        <shortName evidence="1">ASAL</shortName>
        <ecNumber evidence="1">4.3.2.1</ecNumber>
    </recommendedName>
    <alternativeName>
        <fullName evidence="1">Arginosuccinase</fullName>
    </alternativeName>
</protein>
<name>ARLY_STRT2</name>
<comment type="catalytic activity">
    <reaction evidence="1">
        <text>2-(N(omega)-L-arginino)succinate = fumarate + L-arginine</text>
        <dbReference type="Rhea" id="RHEA:24020"/>
        <dbReference type="ChEBI" id="CHEBI:29806"/>
        <dbReference type="ChEBI" id="CHEBI:32682"/>
        <dbReference type="ChEBI" id="CHEBI:57472"/>
        <dbReference type="EC" id="4.3.2.1"/>
    </reaction>
</comment>
<comment type="pathway">
    <text evidence="1">Amino-acid biosynthesis; L-arginine biosynthesis; L-arginine from L-ornithine and carbamoyl phosphate: step 3/3.</text>
</comment>
<comment type="subcellular location">
    <subcellularLocation>
        <location evidence="1">Cytoplasm</location>
    </subcellularLocation>
</comment>
<comment type="similarity">
    <text evidence="1">Belongs to the lyase 1 family. Argininosuccinate lyase subfamily.</text>
</comment>
<comment type="sequence caution" evidence="2">
    <conflict type="erroneous initiation">
        <sequence resource="EMBL-CDS" id="AAV61411"/>
    </conflict>
</comment>
<evidence type="ECO:0000255" key="1">
    <source>
        <dbReference type="HAMAP-Rule" id="MF_00006"/>
    </source>
</evidence>
<evidence type="ECO:0000305" key="2"/>
<organism>
    <name type="scientific">Streptococcus thermophilus (strain ATCC BAA-250 / LMG 18311)</name>
    <dbReference type="NCBI Taxonomy" id="264199"/>
    <lineage>
        <taxon>Bacteria</taxon>
        <taxon>Bacillati</taxon>
        <taxon>Bacillota</taxon>
        <taxon>Bacilli</taxon>
        <taxon>Lactobacillales</taxon>
        <taxon>Streptococcaceae</taxon>
        <taxon>Streptococcus</taxon>
    </lineage>
</organism>
<sequence>MAENHKLWGGRFEASLEKWVEEFGASISFDQKMAEFDLKGSIAHVTMLGETGIIAQEEALQIKQGLEELLEEYKAGKLEFDVSNEDIHMNIESLLTAKIGPVAGKLHTARSRNDQVATDMHLYLKAKLVEVIEKIDNLRNTLVSLADKHTYTIMPGYTHLQHAQPISFGHHLMAYYNMFTRDSERFEFNIKHTDISPLGAAALAGTTFPIDRNMTSDLMGFAKPYSNSLDAVSDRDFILEFLSNSSILMMHMTRICEEIINWCSNEFKFVTLSDTFSTGSSIMPQKKNPDMAELIRGKSGRVYGNLIGLLTVMKSLPLAYNKDLQEDKEGMFDTVETITVAIDILAGMLNTMTVNDKHMAESTEKDFSNATELADYLATKGLPFREAHEIVGKLVLECTKAGYYLQDVPLERYQEVSDLIEEDIYETLKSHTAVERRHSLGGTGFDQVKWQIKEAQQSLNK</sequence>
<reference key="1">
    <citation type="journal article" date="2004" name="Nat. Biotechnol.">
        <title>Complete sequence and comparative genome analysis of the dairy bacterium Streptococcus thermophilus.</title>
        <authorList>
            <person name="Bolotin A."/>
            <person name="Quinquis B."/>
            <person name="Renault P."/>
            <person name="Sorokin A."/>
            <person name="Ehrlich S.D."/>
            <person name="Kulakauskas S."/>
            <person name="Lapidus A."/>
            <person name="Goltsman E."/>
            <person name="Mazur M."/>
            <person name="Pusch G.D."/>
            <person name="Fonstein M."/>
            <person name="Overbeek R."/>
            <person name="Kyprides N."/>
            <person name="Purnelle B."/>
            <person name="Prozzi D."/>
            <person name="Ngui K."/>
            <person name="Masuy D."/>
            <person name="Hancy F."/>
            <person name="Burteau S."/>
            <person name="Boutry M."/>
            <person name="Delcour J."/>
            <person name="Goffeau A."/>
            <person name="Hols P."/>
        </authorList>
    </citation>
    <scope>NUCLEOTIDE SEQUENCE [LARGE SCALE GENOMIC DNA]</scope>
    <source>
        <strain>ATCC BAA-250 / LMG 18311</strain>
    </source>
</reference>
<gene>
    <name evidence="1" type="primary">argH</name>
    <name type="ordered locus">stu1812</name>
</gene>
<dbReference type="EC" id="4.3.2.1" evidence="1"/>
<dbReference type="EMBL" id="CP000023">
    <property type="protein sequence ID" value="AAV61411.1"/>
    <property type="status" value="ALT_INIT"/>
    <property type="molecule type" value="Genomic_DNA"/>
</dbReference>
<dbReference type="RefSeq" id="WP_002953530.1">
    <property type="nucleotide sequence ID" value="NC_006448.1"/>
</dbReference>
<dbReference type="SMR" id="Q5M2K3"/>
<dbReference type="STRING" id="264199.stu1812"/>
<dbReference type="GeneID" id="66899549"/>
<dbReference type="KEGG" id="stl:stu1812"/>
<dbReference type="eggNOG" id="COG0165">
    <property type="taxonomic scope" value="Bacteria"/>
</dbReference>
<dbReference type="HOGENOM" id="CLU_027272_2_3_9"/>
<dbReference type="UniPathway" id="UPA00068">
    <property type="reaction ID" value="UER00114"/>
</dbReference>
<dbReference type="Proteomes" id="UP000001170">
    <property type="component" value="Chromosome"/>
</dbReference>
<dbReference type="GO" id="GO:0005829">
    <property type="term" value="C:cytosol"/>
    <property type="evidence" value="ECO:0007669"/>
    <property type="project" value="TreeGrafter"/>
</dbReference>
<dbReference type="GO" id="GO:0004056">
    <property type="term" value="F:argininosuccinate lyase activity"/>
    <property type="evidence" value="ECO:0007669"/>
    <property type="project" value="UniProtKB-UniRule"/>
</dbReference>
<dbReference type="GO" id="GO:0042450">
    <property type="term" value="P:arginine biosynthetic process via ornithine"/>
    <property type="evidence" value="ECO:0007669"/>
    <property type="project" value="InterPro"/>
</dbReference>
<dbReference type="GO" id="GO:0006526">
    <property type="term" value="P:L-arginine biosynthetic process"/>
    <property type="evidence" value="ECO:0007669"/>
    <property type="project" value="UniProtKB-UniRule"/>
</dbReference>
<dbReference type="CDD" id="cd01359">
    <property type="entry name" value="Argininosuccinate_lyase"/>
    <property type="match status" value="1"/>
</dbReference>
<dbReference type="FunFam" id="1.10.275.10:FF:000002">
    <property type="entry name" value="Argininosuccinate lyase"/>
    <property type="match status" value="1"/>
</dbReference>
<dbReference type="FunFam" id="1.10.40.30:FF:000001">
    <property type="entry name" value="Argininosuccinate lyase"/>
    <property type="match status" value="1"/>
</dbReference>
<dbReference type="FunFam" id="1.20.200.10:FF:000002">
    <property type="entry name" value="Argininosuccinate lyase"/>
    <property type="match status" value="1"/>
</dbReference>
<dbReference type="Gene3D" id="1.10.40.30">
    <property type="entry name" value="Fumarase/aspartase (C-terminal domain)"/>
    <property type="match status" value="1"/>
</dbReference>
<dbReference type="Gene3D" id="1.20.200.10">
    <property type="entry name" value="Fumarase/aspartase (Central domain)"/>
    <property type="match status" value="1"/>
</dbReference>
<dbReference type="Gene3D" id="1.10.275.10">
    <property type="entry name" value="Fumarase/aspartase (N-terminal domain)"/>
    <property type="match status" value="1"/>
</dbReference>
<dbReference type="HAMAP" id="MF_00006">
    <property type="entry name" value="Arg_succ_lyase"/>
    <property type="match status" value="1"/>
</dbReference>
<dbReference type="InterPro" id="IPR029419">
    <property type="entry name" value="Arg_succ_lyase_C"/>
</dbReference>
<dbReference type="InterPro" id="IPR009049">
    <property type="entry name" value="Argininosuccinate_lyase"/>
</dbReference>
<dbReference type="InterPro" id="IPR024083">
    <property type="entry name" value="Fumarase/histidase_N"/>
</dbReference>
<dbReference type="InterPro" id="IPR020557">
    <property type="entry name" value="Fumarate_lyase_CS"/>
</dbReference>
<dbReference type="InterPro" id="IPR000362">
    <property type="entry name" value="Fumarate_lyase_fam"/>
</dbReference>
<dbReference type="InterPro" id="IPR022761">
    <property type="entry name" value="Fumarate_lyase_N"/>
</dbReference>
<dbReference type="InterPro" id="IPR008948">
    <property type="entry name" value="L-Aspartase-like"/>
</dbReference>
<dbReference type="NCBIfam" id="TIGR00838">
    <property type="entry name" value="argH"/>
    <property type="match status" value="1"/>
</dbReference>
<dbReference type="PANTHER" id="PTHR43814">
    <property type="entry name" value="ARGININOSUCCINATE LYASE"/>
    <property type="match status" value="1"/>
</dbReference>
<dbReference type="PANTHER" id="PTHR43814:SF1">
    <property type="entry name" value="ARGININOSUCCINATE LYASE"/>
    <property type="match status" value="1"/>
</dbReference>
<dbReference type="Pfam" id="PF14698">
    <property type="entry name" value="ASL_C2"/>
    <property type="match status" value="1"/>
</dbReference>
<dbReference type="Pfam" id="PF00206">
    <property type="entry name" value="Lyase_1"/>
    <property type="match status" value="1"/>
</dbReference>
<dbReference type="PRINTS" id="PR00145">
    <property type="entry name" value="ARGSUCLYASE"/>
</dbReference>
<dbReference type="PRINTS" id="PR00149">
    <property type="entry name" value="FUMRATELYASE"/>
</dbReference>
<dbReference type="SUPFAM" id="SSF48557">
    <property type="entry name" value="L-aspartase-like"/>
    <property type="match status" value="1"/>
</dbReference>
<dbReference type="PROSITE" id="PS00163">
    <property type="entry name" value="FUMARATE_LYASES"/>
    <property type="match status" value="1"/>
</dbReference>